<protein>
    <recommendedName>
        <fullName evidence="1">Small ribosomal subunit protein uS13</fullName>
    </recommendedName>
    <alternativeName>
        <fullName evidence="3">30S ribosomal protein S13</fullName>
    </alternativeName>
</protein>
<sequence length="118" mass="13196">MARIAGVNIPDNKHAAISLTYIFGIGRTRAQEICAATGIAPTAKVQDLSAEEVDTLRNEVGKYTVEGDLRRDTTLNIKRLMDLGCYRGLRHRRGLPLRGQRTKTNARTRKGPRKPIRK</sequence>
<feature type="chain" id="PRO_0000306586" description="Small ribosomal subunit protein uS13">
    <location>
        <begin position="1"/>
        <end position="118"/>
    </location>
</feature>
<feature type="region of interest" description="Disordered" evidence="2">
    <location>
        <begin position="94"/>
        <end position="118"/>
    </location>
</feature>
<dbReference type="EMBL" id="CP000285">
    <property type="protein sequence ID" value="ABE57805.1"/>
    <property type="molecule type" value="Genomic_DNA"/>
</dbReference>
<dbReference type="RefSeq" id="WP_011505751.1">
    <property type="nucleotide sequence ID" value="NC_007963.1"/>
</dbReference>
<dbReference type="SMR" id="Q1R0F3"/>
<dbReference type="STRING" id="290398.Csal_0443"/>
<dbReference type="GeneID" id="95333195"/>
<dbReference type="KEGG" id="csa:Csal_0443"/>
<dbReference type="eggNOG" id="COG0099">
    <property type="taxonomic scope" value="Bacteria"/>
</dbReference>
<dbReference type="HOGENOM" id="CLU_103849_1_2_6"/>
<dbReference type="OrthoDB" id="9803610at2"/>
<dbReference type="Proteomes" id="UP000000239">
    <property type="component" value="Chromosome"/>
</dbReference>
<dbReference type="GO" id="GO:0005829">
    <property type="term" value="C:cytosol"/>
    <property type="evidence" value="ECO:0007669"/>
    <property type="project" value="TreeGrafter"/>
</dbReference>
<dbReference type="GO" id="GO:0015935">
    <property type="term" value="C:small ribosomal subunit"/>
    <property type="evidence" value="ECO:0007669"/>
    <property type="project" value="TreeGrafter"/>
</dbReference>
<dbReference type="GO" id="GO:0019843">
    <property type="term" value="F:rRNA binding"/>
    <property type="evidence" value="ECO:0007669"/>
    <property type="project" value="UniProtKB-UniRule"/>
</dbReference>
<dbReference type="GO" id="GO:0003735">
    <property type="term" value="F:structural constituent of ribosome"/>
    <property type="evidence" value="ECO:0007669"/>
    <property type="project" value="InterPro"/>
</dbReference>
<dbReference type="GO" id="GO:0000049">
    <property type="term" value="F:tRNA binding"/>
    <property type="evidence" value="ECO:0007669"/>
    <property type="project" value="UniProtKB-UniRule"/>
</dbReference>
<dbReference type="GO" id="GO:0006412">
    <property type="term" value="P:translation"/>
    <property type="evidence" value="ECO:0007669"/>
    <property type="project" value="UniProtKB-UniRule"/>
</dbReference>
<dbReference type="FunFam" id="1.10.8.50:FF:000001">
    <property type="entry name" value="30S ribosomal protein S13"/>
    <property type="match status" value="1"/>
</dbReference>
<dbReference type="FunFam" id="4.10.910.10:FF:000001">
    <property type="entry name" value="30S ribosomal protein S13"/>
    <property type="match status" value="1"/>
</dbReference>
<dbReference type="Gene3D" id="1.10.8.50">
    <property type="match status" value="1"/>
</dbReference>
<dbReference type="Gene3D" id="4.10.910.10">
    <property type="entry name" value="30s ribosomal protein s13, domain 2"/>
    <property type="match status" value="1"/>
</dbReference>
<dbReference type="HAMAP" id="MF_01315">
    <property type="entry name" value="Ribosomal_uS13"/>
    <property type="match status" value="1"/>
</dbReference>
<dbReference type="InterPro" id="IPR027437">
    <property type="entry name" value="Rbsml_uS13_C"/>
</dbReference>
<dbReference type="InterPro" id="IPR001892">
    <property type="entry name" value="Ribosomal_uS13"/>
</dbReference>
<dbReference type="InterPro" id="IPR010979">
    <property type="entry name" value="Ribosomal_uS13-like_H2TH"/>
</dbReference>
<dbReference type="InterPro" id="IPR019980">
    <property type="entry name" value="Ribosomal_uS13_bac-type"/>
</dbReference>
<dbReference type="InterPro" id="IPR018269">
    <property type="entry name" value="Ribosomal_uS13_CS"/>
</dbReference>
<dbReference type="NCBIfam" id="TIGR03631">
    <property type="entry name" value="uS13_bact"/>
    <property type="match status" value="1"/>
</dbReference>
<dbReference type="PANTHER" id="PTHR10871">
    <property type="entry name" value="30S RIBOSOMAL PROTEIN S13/40S RIBOSOMAL PROTEIN S18"/>
    <property type="match status" value="1"/>
</dbReference>
<dbReference type="PANTHER" id="PTHR10871:SF1">
    <property type="entry name" value="SMALL RIBOSOMAL SUBUNIT PROTEIN US13M"/>
    <property type="match status" value="1"/>
</dbReference>
<dbReference type="Pfam" id="PF00416">
    <property type="entry name" value="Ribosomal_S13"/>
    <property type="match status" value="2"/>
</dbReference>
<dbReference type="PIRSF" id="PIRSF002134">
    <property type="entry name" value="Ribosomal_S13"/>
    <property type="match status" value="1"/>
</dbReference>
<dbReference type="SUPFAM" id="SSF46946">
    <property type="entry name" value="S13-like H2TH domain"/>
    <property type="match status" value="1"/>
</dbReference>
<dbReference type="PROSITE" id="PS00646">
    <property type="entry name" value="RIBOSOMAL_S13_1"/>
    <property type="match status" value="1"/>
</dbReference>
<dbReference type="PROSITE" id="PS50159">
    <property type="entry name" value="RIBOSOMAL_S13_2"/>
    <property type="match status" value="1"/>
</dbReference>
<accession>Q1R0F3</accession>
<reference key="1">
    <citation type="journal article" date="2011" name="Stand. Genomic Sci.">
        <title>Complete genome sequence of the halophilic and highly halotolerant Chromohalobacter salexigens type strain (1H11(T)).</title>
        <authorList>
            <person name="Copeland A."/>
            <person name="O'Connor K."/>
            <person name="Lucas S."/>
            <person name="Lapidus A."/>
            <person name="Berry K.W."/>
            <person name="Detter J.C."/>
            <person name="Del Rio T.G."/>
            <person name="Hammon N."/>
            <person name="Dalin E."/>
            <person name="Tice H."/>
            <person name="Pitluck S."/>
            <person name="Bruce D."/>
            <person name="Goodwin L."/>
            <person name="Han C."/>
            <person name="Tapia R."/>
            <person name="Saunders E."/>
            <person name="Schmutz J."/>
            <person name="Brettin T."/>
            <person name="Larimer F."/>
            <person name="Land M."/>
            <person name="Hauser L."/>
            <person name="Vargas C."/>
            <person name="Nieto J.J."/>
            <person name="Kyrpides N.C."/>
            <person name="Ivanova N."/>
            <person name="Goker M."/>
            <person name="Klenk H.P."/>
            <person name="Csonka L.N."/>
            <person name="Woyke T."/>
        </authorList>
    </citation>
    <scope>NUCLEOTIDE SEQUENCE [LARGE SCALE GENOMIC DNA]</scope>
    <source>
        <strain>ATCC BAA-138 / DSM 3043 / CIP 106854 / NCIMB 13768 / 1H11</strain>
    </source>
</reference>
<organism>
    <name type="scientific">Chromohalobacter salexigens (strain ATCC BAA-138 / DSM 3043 / CIP 106854 / NCIMB 13768 / 1H11)</name>
    <dbReference type="NCBI Taxonomy" id="290398"/>
    <lineage>
        <taxon>Bacteria</taxon>
        <taxon>Pseudomonadati</taxon>
        <taxon>Pseudomonadota</taxon>
        <taxon>Gammaproteobacteria</taxon>
        <taxon>Oceanospirillales</taxon>
        <taxon>Halomonadaceae</taxon>
        <taxon>Chromohalobacter</taxon>
    </lineage>
</organism>
<gene>
    <name evidence="1" type="primary">rpsM</name>
    <name type="ordered locus">Csal_0443</name>
</gene>
<keyword id="KW-1185">Reference proteome</keyword>
<keyword id="KW-0687">Ribonucleoprotein</keyword>
<keyword id="KW-0689">Ribosomal protein</keyword>
<keyword id="KW-0694">RNA-binding</keyword>
<keyword id="KW-0699">rRNA-binding</keyword>
<keyword id="KW-0820">tRNA-binding</keyword>
<evidence type="ECO:0000255" key="1">
    <source>
        <dbReference type="HAMAP-Rule" id="MF_01315"/>
    </source>
</evidence>
<evidence type="ECO:0000256" key="2">
    <source>
        <dbReference type="SAM" id="MobiDB-lite"/>
    </source>
</evidence>
<evidence type="ECO:0000305" key="3"/>
<name>RS13_CHRSD</name>
<proteinExistence type="inferred from homology"/>
<comment type="function">
    <text evidence="1">Located at the top of the head of the 30S subunit, it contacts several helices of the 16S rRNA. In the 70S ribosome it contacts the 23S rRNA (bridge B1a) and protein L5 of the 50S subunit (bridge B1b), connecting the 2 subunits; these bridges are implicated in subunit movement. Contacts the tRNAs in the A and P-sites.</text>
</comment>
<comment type="subunit">
    <text evidence="1">Part of the 30S ribosomal subunit. Forms a loose heterodimer with protein S19. Forms two bridges to the 50S subunit in the 70S ribosome.</text>
</comment>
<comment type="similarity">
    <text evidence="1">Belongs to the universal ribosomal protein uS13 family.</text>
</comment>